<reference key="1">
    <citation type="journal article" date="2012" name="BMC Genomics">
        <title>Comparative genomics and transcriptomics of lineages I, II, and III strains of Listeria monocytogenes.</title>
        <authorList>
            <person name="Hain T."/>
            <person name="Ghai R."/>
            <person name="Billion A."/>
            <person name="Kuenne C.T."/>
            <person name="Steinweg C."/>
            <person name="Izar B."/>
            <person name="Mohamed W."/>
            <person name="Mraheil M."/>
            <person name="Domann E."/>
            <person name="Schaffrath S."/>
            <person name="Karst U."/>
            <person name="Goesmann A."/>
            <person name="Oehm S."/>
            <person name="Puhler A."/>
            <person name="Merkl R."/>
            <person name="Vorwerk S."/>
            <person name="Glaser P."/>
            <person name="Garrido P."/>
            <person name="Rusniok C."/>
            <person name="Buchrieser C."/>
            <person name="Goebel W."/>
            <person name="Chakraborty T."/>
        </authorList>
    </citation>
    <scope>NUCLEOTIDE SEQUENCE [LARGE SCALE GENOMIC DNA]</scope>
    <source>
        <strain>CLIP80459</strain>
    </source>
</reference>
<accession>C1KYN9</accession>
<sequence>MSFASETKKELTHMDVSDSDAKVELAAFIRMNGAISFSNQLVIMDVQTENAAIARRMYQLLKDLYEVPIELLVRRKMKLKKNNVYIVRLKSGTRGILEDLRILEPPMTFTKSIDRGFVKKRSAKRAYLRGAFLASGSVNNPETSSYHLEIFSVYEEHNEAICALMNQFDLNARTLERKNGFITYLKEAEKITEFLSIIGATSALLHFEDVRIMRDMRNSVNRLVNCETANLNKTINAAVRQIDNIKYIQSTVGLEALPERLREIAALRIANEDVTLKELGEMLTTGQVSKSGINHRLRKLDQIAERLRSGETPAQVGLKISNS</sequence>
<proteinExistence type="inferred from homology"/>
<protein>
    <recommendedName>
        <fullName evidence="1">Probable cell division protein WhiA</fullName>
    </recommendedName>
</protein>
<name>WHIA_LISMC</name>
<feature type="chain" id="PRO_1000215258" description="Probable cell division protein WhiA">
    <location>
        <begin position="1"/>
        <end position="323"/>
    </location>
</feature>
<feature type="DNA-binding region" description="H-T-H motif" evidence="1">
    <location>
        <begin position="275"/>
        <end position="309"/>
    </location>
</feature>
<gene>
    <name evidence="1" type="primary">whiA</name>
    <name type="ordered locus">Lm4b_02441</name>
</gene>
<evidence type="ECO:0000255" key="1">
    <source>
        <dbReference type="HAMAP-Rule" id="MF_01420"/>
    </source>
</evidence>
<keyword id="KW-0131">Cell cycle</keyword>
<keyword id="KW-0132">Cell division</keyword>
<keyword id="KW-0238">DNA-binding</keyword>
<comment type="function">
    <text evidence="1">Involved in cell division and chromosome segregation.</text>
</comment>
<comment type="similarity">
    <text evidence="1">Belongs to the WhiA family.</text>
</comment>
<organism>
    <name type="scientific">Listeria monocytogenes serotype 4b (strain CLIP80459)</name>
    <dbReference type="NCBI Taxonomy" id="568819"/>
    <lineage>
        <taxon>Bacteria</taxon>
        <taxon>Bacillati</taxon>
        <taxon>Bacillota</taxon>
        <taxon>Bacilli</taxon>
        <taxon>Bacillales</taxon>
        <taxon>Listeriaceae</taxon>
        <taxon>Listeria</taxon>
    </lineage>
</organism>
<dbReference type="EMBL" id="FM242711">
    <property type="protein sequence ID" value="CAS06196.1"/>
    <property type="molecule type" value="Genomic_DNA"/>
</dbReference>
<dbReference type="RefSeq" id="WP_003725407.1">
    <property type="nucleotide sequence ID" value="NC_012488.1"/>
</dbReference>
<dbReference type="SMR" id="C1KYN9"/>
<dbReference type="KEGG" id="lmc:Lm4b_02441"/>
<dbReference type="HOGENOM" id="CLU_053282_0_0_9"/>
<dbReference type="GO" id="GO:0003677">
    <property type="term" value="F:DNA binding"/>
    <property type="evidence" value="ECO:0007669"/>
    <property type="project" value="UniProtKB-UniRule"/>
</dbReference>
<dbReference type="GO" id="GO:0051301">
    <property type="term" value="P:cell division"/>
    <property type="evidence" value="ECO:0007669"/>
    <property type="project" value="UniProtKB-UniRule"/>
</dbReference>
<dbReference type="GO" id="GO:0043937">
    <property type="term" value="P:regulation of sporulation"/>
    <property type="evidence" value="ECO:0007669"/>
    <property type="project" value="InterPro"/>
</dbReference>
<dbReference type="FunFam" id="3.10.28.10:FF:000002">
    <property type="entry name" value="Probable cell division protein WhiA"/>
    <property type="match status" value="1"/>
</dbReference>
<dbReference type="Gene3D" id="3.10.28.10">
    <property type="entry name" value="Homing endonucleases"/>
    <property type="match status" value="1"/>
</dbReference>
<dbReference type="HAMAP" id="MF_01420">
    <property type="entry name" value="HTH_type_WhiA"/>
    <property type="match status" value="1"/>
</dbReference>
<dbReference type="InterPro" id="IPR027434">
    <property type="entry name" value="Homing_endonucl"/>
</dbReference>
<dbReference type="InterPro" id="IPR018478">
    <property type="entry name" value="Sporu_reg_WhiA_N_dom"/>
</dbReference>
<dbReference type="InterPro" id="IPR003802">
    <property type="entry name" value="Sporulation_regulator_WhiA"/>
</dbReference>
<dbReference type="InterPro" id="IPR023054">
    <property type="entry name" value="Sporulation_regulator_WhiA_C"/>
</dbReference>
<dbReference type="InterPro" id="IPR039518">
    <property type="entry name" value="WhiA_LAGLIDADG_dom"/>
</dbReference>
<dbReference type="NCBIfam" id="TIGR00647">
    <property type="entry name" value="DNA_bind_WhiA"/>
    <property type="match status" value="1"/>
</dbReference>
<dbReference type="PANTHER" id="PTHR37307">
    <property type="entry name" value="CELL DIVISION PROTEIN WHIA-RELATED"/>
    <property type="match status" value="1"/>
</dbReference>
<dbReference type="PANTHER" id="PTHR37307:SF1">
    <property type="entry name" value="CELL DIVISION PROTEIN WHIA-RELATED"/>
    <property type="match status" value="1"/>
</dbReference>
<dbReference type="Pfam" id="PF02650">
    <property type="entry name" value="HTH_WhiA"/>
    <property type="match status" value="1"/>
</dbReference>
<dbReference type="Pfam" id="PF14527">
    <property type="entry name" value="LAGLIDADG_WhiA"/>
    <property type="match status" value="1"/>
</dbReference>
<dbReference type="Pfam" id="PF10298">
    <property type="entry name" value="WhiA_N"/>
    <property type="match status" value="1"/>
</dbReference>
<dbReference type="SUPFAM" id="SSF55608">
    <property type="entry name" value="Homing endonucleases"/>
    <property type="match status" value="1"/>
</dbReference>